<sequence length="612" mass="70279">MIVDNSKDFDLKSFLANLTTHSGVYRMLDKHGEIIYVGKAKNLKNRINSYFSKGAKDSKTLMMVEQIARIEITITPSDYEAYLLENNLIKQHRPKYNILFKDDKSYPYLVISRDKFPRVSFYRGKSAYKKGQCFGPYVSISSVKNTLNTIQKIFPIRQCENSYYKSRVRPCLQYQIKRCLAPCVGLVSQQQYDEQLAILKKFLAGKFSSVLEEISANMYQASEDMEYEKAQVYRDQLVVLRKLQQQQIVDIQEDKTFDVIGIYMQDSYASIALLQIQNGDVVADRHWSIDAKGQDKTSIMHAFLSHFYLGDEIRNIWPKNIILSKVEFADITDLMNSISQKIGQAINWIIAPAADNLKWLKLAEVNARQKLNIYTSSKSQYQKRLESLKEFLESEKDIKRIECFDISHFQGEATIASCVVYTDDGEDRKSHRRYNIKDIKSGDDYAAIHQAVSRRVSSGLEADNLPDVMIIDGGKGQIHQAEAVFREYGIQDKVQLVSLGKGVERISGKEKIYKGFDDTEYTLDEHNPGFLLLRQVRDSAHDHAIKGQRKKVSANRQSSIIEEIEGVGPKRRKALMMYFGGWQELSRASVDEIAKVKGISKKLAQEIWECFH</sequence>
<name>UVRC_FRATH</name>
<comment type="function">
    <text evidence="1">The UvrABC repair system catalyzes the recognition and processing of DNA lesions. UvrC both incises the 5' and 3' sides of the lesion. The N-terminal half is responsible for the 3' incision and the C-terminal half is responsible for the 5' incision.</text>
</comment>
<comment type="subunit">
    <text evidence="1">Interacts with UvrB in an incision complex.</text>
</comment>
<comment type="subcellular location">
    <subcellularLocation>
        <location evidence="1">Cytoplasm</location>
    </subcellularLocation>
</comment>
<comment type="similarity">
    <text evidence="1">Belongs to the UvrC family.</text>
</comment>
<reference key="1">
    <citation type="submission" date="2006-03" db="EMBL/GenBank/DDBJ databases">
        <title>Complete genome sequence of Francisella tularensis LVS (Live Vaccine Strain).</title>
        <authorList>
            <person name="Chain P."/>
            <person name="Larimer F."/>
            <person name="Land M."/>
            <person name="Stilwagen S."/>
            <person name="Larsson P."/>
            <person name="Bearden S."/>
            <person name="Chu M."/>
            <person name="Oyston P."/>
            <person name="Forsman M."/>
            <person name="Andersson S."/>
            <person name="Lindler L."/>
            <person name="Titball R."/>
            <person name="Garcia E."/>
        </authorList>
    </citation>
    <scope>NUCLEOTIDE SEQUENCE [LARGE SCALE GENOMIC DNA]</scope>
    <source>
        <strain>LVS</strain>
    </source>
</reference>
<keyword id="KW-0963">Cytoplasm</keyword>
<keyword id="KW-0227">DNA damage</keyword>
<keyword id="KW-0228">DNA excision</keyword>
<keyword id="KW-0234">DNA repair</keyword>
<keyword id="KW-0267">Excision nuclease</keyword>
<keyword id="KW-1185">Reference proteome</keyword>
<keyword id="KW-0742">SOS response</keyword>
<organism>
    <name type="scientific">Francisella tularensis subsp. holarctica (strain LVS)</name>
    <dbReference type="NCBI Taxonomy" id="376619"/>
    <lineage>
        <taxon>Bacteria</taxon>
        <taxon>Pseudomonadati</taxon>
        <taxon>Pseudomonadota</taxon>
        <taxon>Gammaproteobacteria</taxon>
        <taxon>Thiotrichales</taxon>
        <taxon>Francisellaceae</taxon>
        <taxon>Francisella</taxon>
    </lineage>
</organism>
<dbReference type="EMBL" id="AM233362">
    <property type="protein sequence ID" value="CAJ79887.1"/>
    <property type="molecule type" value="Genomic_DNA"/>
</dbReference>
<dbReference type="RefSeq" id="WP_003016747.1">
    <property type="nucleotide sequence ID" value="NZ_CP009694.1"/>
</dbReference>
<dbReference type="SMR" id="Q2A2E9"/>
<dbReference type="KEGG" id="ftl:FTL_1448"/>
<dbReference type="Proteomes" id="UP000001944">
    <property type="component" value="Chromosome"/>
</dbReference>
<dbReference type="GO" id="GO:0005737">
    <property type="term" value="C:cytoplasm"/>
    <property type="evidence" value="ECO:0007669"/>
    <property type="project" value="UniProtKB-SubCell"/>
</dbReference>
<dbReference type="GO" id="GO:0009380">
    <property type="term" value="C:excinuclease repair complex"/>
    <property type="evidence" value="ECO:0007669"/>
    <property type="project" value="InterPro"/>
</dbReference>
<dbReference type="GO" id="GO:0003677">
    <property type="term" value="F:DNA binding"/>
    <property type="evidence" value="ECO:0007669"/>
    <property type="project" value="UniProtKB-UniRule"/>
</dbReference>
<dbReference type="GO" id="GO:0009381">
    <property type="term" value="F:excinuclease ABC activity"/>
    <property type="evidence" value="ECO:0007669"/>
    <property type="project" value="UniProtKB-UniRule"/>
</dbReference>
<dbReference type="GO" id="GO:0006289">
    <property type="term" value="P:nucleotide-excision repair"/>
    <property type="evidence" value="ECO:0007669"/>
    <property type="project" value="UniProtKB-UniRule"/>
</dbReference>
<dbReference type="GO" id="GO:0009432">
    <property type="term" value="P:SOS response"/>
    <property type="evidence" value="ECO:0007669"/>
    <property type="project" value="UniProtKB-UniRule"/>
</dbReference>
<dbReference type="CDD" id="cd10434">
    <property type="entry name" value="GIY-YIG_UvrC_Cho"/>
    <property type="match status" value="1"/>
</dbReference>
<dbReference type="FunFam" id="3.30.420.340:FF:000001">
    <property type="entry name" value="UvrABC system protein C"/>
    <property type="match status" value="1"/>
</dbReference>
<dbReference type="FunFam" id="3.40.1440.10:FF:000001">
    <property type="entry name" value="UvrABC system protein C"/>
    <property type="match status" value="1"/>
</dbReference>
<dbReference type="Gene3D" id="1.10.150.20">
    <property type="entry name" value="5' to 3' exonuclease, C-terminal subdomain"/>
    <property type="match status" value="1"/>
</dbReference>
<dbReference type="Gene3D" id="3.40.1440.10">
    <property type="entry name" value="GIY-YIG endonuclease"/>
    <property type="match status" value="1"/>
</dbReference>
<dbReference type="Gene3D" id="4.10.860.10">
    <property type="entry name" value="UVR domain"/>
    <property type="match status" value="1"/>
</dbReference>
<dbReference type="Gene3D" id="3.30.420.340">
    <property type="entry name" value="UvrC, RNAse H endonuclease domain"/>
    <property type="match status" value="1"/>
</dbReference>
<dbReference type="HAMAP" id="MF_00203">
    <property type="entry name" value="UvrC"/>
    <property type="match status" value="1"/>
</dbReference>
<dbReference type="InterPro" id="IPR000305">
    <property type="entry name" value="GIY-YIG_endonuc"/>
</dbReference>
<dbReference type="InterPro" id="IPR035901">
    <property type="entry name" value="GIY-YIG_endonuc_sf"/>
</dbReference>
<dbReference type="InterPro" id="IPR047296">
    <property type="entry name" value="GIY-YIG_UvrC_Cho"/>
</dbReference>
<dbReference type="InterPro" id="IPR010994">
    <property type="entry name" value="RuvA_2-like"/>
</dbReference>
<dbReference type="InterPro" id="IPR001943">
    <property type="entry name" value="UVR_dom"/>
</dbReference>
<dbReference type="InterPro" id="IPR036876">
    <property type="entry name" value="UVR_dom_sf"/>
</dbReference>
<dbReference type="InterPro" id="IPR050066">
    <property type="entry name" value="UvrABC_protein_C"/>
</dbReference>
<dbReference type="InterPro" id="IPR004791">
    <property type="entry name" value="UvrC"/>
</dbReference>
<dbReference type="InterPro" id="IPR001162">
    <property type="entry name" value="UvrC_RNase_H_dom"/>
</dbReference>
<dbReference type="InterPro" id="IPR038476">
    <property type="entry name" value="UvrC_RNase_H_dom_sf"/>
</dbReference>
<dbReference type="NCBIfam" id="TIGR00194">
    <property type="entry name" value="uvrC"/>
    <property type="match status" value="1"/>
</dbReference>
<dbReference type="PANTHER" id="PTHR30562:SF1">
    <property type="entry name" value="UVRABC SYSTEM PROTEIN C"/>
    <property type="match status" value="1"/>
</dbReference>
<dbReference type="PANTHER" id="PTHR30562">
    <property type="entry name" value="UVRC/OXIDOREDUCTASE"/>
    <property type="match status" value="1"/>
</dbReference>
<dbReference type="Pfam" id="PF01541">
    <property type="entry name" value="GIY-YIG"/>
    <property type="match status" value="1"/>
</dbReference>
<dbReference type="Pfam" id="PF14520">
    <property type="entry name" value="HHH_5"/>
    <property type="match status" value="1"/>
</dbReference>
<dbReference type="Pfam" id="PF02151">
    <property type="entry name" value="UVR"/>
    <property type="match status" value="1"/>
</dbReference>
<dbReference type="Pfam" id="PF22920">
    <property type="entry name" value="UvrC_RNaseH"/>
    <property type="match status" value="1"/>
</dbReference>
<dbReference type="Pfam" id="PF08459">
    <property type="entry name" value="UvrC_RNaseH_dom"/>
    <property type="match status" value="1"/>
</dbReference>
<dbReference type="SMART" id="SM00465">
    <property type="entry name" value="GIYc"/>
    <property type="match status" value="1"/>
</dbReference>
<dbReference type="SUPFAM" id="SSF46600">
    <property type="entry name" value="C-terminal UvrC-binding domain of UvrB"/>
    <property type="match status" value="1"/>
</dbReference>
<dbReference type="SUPFAM" id="SSF82771">
    <property type="entry name" value="GIY-YIG endonuclease"/>
    <property type="match status" value="1"/>
</dbReference>
<dbReference type="SUPFAM" id="SSF47781">
    <property type="entry name" value="RuvA domain 2-like"/>
    <property type="match status" value="1"/>
</dbReference>
<dbReference type="PROSITE" id="PS50164">
    <property type="entry name" value="GIY_YIG"/>
    <property type="match status" value="1"/>
</dbReference>
<dbReference type="PROSITE" id="PS50151">
    <property type="entry name" value="UVR"/>
    <property type="match status" value="1"/>
</dbReference>
<dbReference type="PROSITE" id="PS50165">
    <property type="entry name" value="UVRC"/>
    <property type="match status" value="1"/>
</dbReference>
<protein>
    <recommendedName>
        <fullName evidence="1">UvrABC system protein C</fullName>
        <shortName evidence="1">Protein UvrC</shortName>
    </recommendedName>
    <alternativeName>
        <fullName evidence="1">Excinuclease ABC subunit C</fullName>
    </alternativeName>
</protein>
<evidence type="ECO:0000255" key="1">
    <source>
        <dbReference type="HAMAP-Rule" id="MF_00203"/>
    </source>
</evidence>
<gene>
    <name evidence="1" type="primary">uvrC</name>
    <name type="ordered locus">FTL_1448</name>
</gene>
<accession>Q2A2E9</accession>
<feature type="chain" id="PRO_0000264892" description="UvrABC system protein C">
    <location>
        <begin position="1"/>
        <end position="612"/>
    </location>
</feature>
<feature type="domain" description="GIY-YIG" evidence="1">
    <location>
        <begin position="20"/>
        <end position="98"/>
    </location>
</feature>
<feature type="domain" description="UVR" evidence="1">
    <location>
        <begin position="208"/>
        <end position="243"/>
    </location>
</feature>
<proteinExistence type="inferred from homology"/>